<keyword id="KW-0150">Chloroplast</keyword>
<keyword id="KW-1015">Disulfide bond</keyword>
<keyword id="KW-0521">NADP</keyword>
<keyword id="KW-0560">Oxidoreductase</keyword>
<keyword id="KW-0934">Plastid</keyword>
<keyword id="KW-0809">Transit peptide</keyword>
<organism>
    <name type="scientific">Mesembryanthemum crystallinum</name>
    <name type="common">Common ice plant</name>
    <name type="synonym">Cryophytum crystallinum</name>
    <dbReference type="NCBI Taxonomy" id="3544"/>
    <lineage>
        <taxon>Eukaryota</taxon>
        <taxon>Viridiplantae</taxon>
        <taxon>Streptophyta</taxon>
        <taxon>Embryophyta</taxon>
        <taxon>Tracheophyta</taxon>
        <taxon>Spermatophyta</taxon>
        <taxon>Magnoliopsida</taxon>
        <taxon>eudicotyledons</taxon>
        <taxon>Gunneridae</taxon>
        <taxon>Pentapetalae</taxon>
        <taxon>Caryophyllales</taxon>
        <taxon>Aizoaceae</taxon>
        <taxon>Mesembryanthemum</taxon>
        <taxon>Mesembryanthemum subgen. Cryophytum</taxon>
    </lineage>
</organism>
<sequence>MAVAELSPSYKTQLKTCQQLSSSLSTRLSDHRKFSLRLLPRPVSVRGGIRCSVAPNQVQAPVAVPAEGQTGKPECYGIFCLTYDLKAEEETKTWKKMITIAVSGAAGMISNHLLFKLASGEVFGPDQPIALKLLGSERSFNALEGVAMELEDSLYPLLRAVSIGIDPYDIFQDAEWALLIGAKPRGPGMERADLLDINGQIFAEQGKALNAVASRNVKVIVVGNPCNTNALICLKNAPNIPAKNFHGLTRLDENRAKCQLALKAGVFYDKVSNMTIWGNHSTTQVPDFLNAKIDGLPVKTVIKDHKWLEEEFTVMIQKRGGALIQKWGRSSAASTAVSIADAIKSLVTPTPEGDWFSSAVYTNGNPYGIAEDLVFSMPCRSKGDGDYELVKDVVFDDYLRQRIKKSEEELLAEKRCTAHLTGEGVAVCDLPAGDTMLPGEM</sequence>
<name>MDHP_MESCR</name>
<feature type="transit peptide" description="Chloroplast" evidence="2">
    <location>
        <begin position="1"/>
        <end position="51"/>
    </location>
</feature>
<feature type="chain" id="PRO_0000018645" description="Malate dehydrogenase [NADP], chloroplastic">
    <location>
        <begin position="52"/>
        <end position="441"/>
    </location>
</feature>
<feature type="active site" description="Proton acceptor" evidence="1">
    <location>
        <position position="280"/>
    </location>
</feature>
<feature type="binding site" evidence="1">
    <location>
        <begin position="104"/>
        <end position="110"/>
    </location>
    <ligand>
        <name>NADP(+)</name>
        <dbReference type="ChEBI" id="CHEBI:58349"/>
    </ligand>
</feature>
<feature type="binding site" evidence="3">
    <location>
        <position position="185"/>
    </location>
    <ligand>
        <name>substrate</name>
    </ligand>
</feature>
<feature type="binding site" evidence="3">
    <location>
        <position position="191"/>
    </location>
    <ligand>
        <name>substrate</name>
    </ligand>
</feature>
<feature type="binding site" evidence="1">
    <location>
        <position position="198"/>
    </location>
    <ligand>
        <name>NADP(+)</name>
        <dbReference type="ChEBI" id="CHEBI:58349"/>
    </ligand>
</feature>
<feature type="binding site" evidence="1">
    <location>
        <position position="205"/>
    </location>
    <ligand>
        <name>NAD(+)</name>
        <dbReference type="ChEBI" id="CHEBI:57540"/>
    </ligand>
</feature>
<feature type="binding site" evidence="1">
    <location>
        <begin position="222"/>
        <end position="224"/>
    </location>
    <ligand>
        <name>NADP(+)</name>
        <dbReference type="ChEBI" id="CHEBI:58349"/>
    </ligand>
</feature>
<feature type="binding site" evidence="3">
    <location>
        <position position="224"/>
    </location>
    <ligand>
        <name>substrate</name>
    </ligand>
</feature>
<feature type="binding site" evidence="3">
    <location>
        <position position="255"/>
    </location>
    <ligand>
        <name>substrate</name>
    </ligand>
</feature>
<feature type="site" description="Activation of NADP-MDH" evidence="1">
    <location>
        <position position="75"/>
    </location>
</feature>
<feature type="site" description="Activation of NADP-MDH" evidence="1">
    <location>
        <position position="80"/>
    </location>
</feature>
<feature type="disulfide bond" description="In oxidized inactive NAD-MDH" evidence="1">
    <location>
        <begin position="75"/>
        <end position="80"/>
    </location>
</feature>
<feature type="disulfide bond" description="In oxidized inactive NAD-MDH" evidence="1">
    <location>
        <begin position="416"/>
        <end position="428"/>
    </location>
</feature>
<dbReference type="EC" id="1.1.1.82"/>
<dbReference type="EMBL" id="X63727">
    <property type="protein sequence ID" value="CAA45270.1"/>
    <property type="molecule type" value="mRNA"/>
</dbReference>
<dbReference type="PIR" id="S33066">
    <property type="entry name" value="S33066"/>
</dbReference>
<dbReference type="SMR" id="Q05145"/>
<dbReference type="GO" id="GO:0009507">
    <property type="term" value="C:chloroplast"/>
    <property type="evidence" value="ECO:0007669"/>
    <property type="project" value="UniProtKB-SubCell"/>
</dbReference>
<dbReference type="GO" id="GO:0046554">
    <property type="term" value="F:L-malate dehydrogenase (NADP+) activity"/>
    <property type="evidence" value="ECO:0007669"/>
    <property type="project" value="UniProtKB-EC"/>
</dbReference>
<dbReference type="GO" id="GO:0006108">
    <property type="term" value="P:malate metabolic process"/>
    <property type="evidence" value="ECO:0007669"/>
    <property type="project" value="InterPro"/>
</dbReference>
<dbReference type="CDD" id="cd01338">
    <property type="entry name" value="MDH_chloroplast-like"/>
    <property type="match status" value="1"/>
</dbReference>
<dbReference type="FunFam" id="3.90.110.10:FF:000002">
    <property type="entry name" value="Malate dehydrogenase"/>
    <property type="match status" value="1"/>
</dbReference>
<dbReference type="FunFam" id="3.40.50.720:FF:000144">
    <property type="entry name" value="Malate dehydrogenase [NADP]"/>
    <property type="match status" value="1"/>
</dbReference>
<dbReference type="Gene3D" id="3.90.110.10">
    <property type="entry name" value="Lactate dehydrogenase/glycoside hydrolase, family 4, C-terminal"/>
    <property type="match status" value="1"/>
</dbReference>
<dbReference type="Gene3D" id="3.40.50.720">
    <property type="entry name" value="NAD(P)-binding Rossmann-like Domain"/>
    <property type="match status" value="1"/>
</dbReference>
<dbReference type="InterPro" id="IPR022383">
    <property type="entry name" value="Lactate/malate_DH_C"/>
</dbReference>
<dbReference type="InterPro" id="IPR001236">
    <property type="entry name" value="Lactate/malate_DH_N"/>
</dbReference>
<dbReference type="InterPro" id="IPR015955">
    <property type="entry name" value="Lactate_DH/Glyco_Ohase_4_C"/>
</dbReference>
<dbReference type="InterPro" id="IPR001252">
    <property type="entry name" value="Malate_DH_AS"/>
</dbReference>
<dbReference type="InterPro" id="IPR011273">
    <property type="entry name" value="Malate_DH_NADP-dep_pln"/>
</dbReference>
<dbReference type="InterPro" id="IPR010945">
    <property type="entry name" value="Malate_DH_type2"/>
</dbReference>
<dbReference type="InterPro" id="IPR036291">
    <property type="entry name" value="NAD(P)-bd_dom_sf"/>
</dbReference>
<dbReference type="NCBIfam" id="TIGR01757">
    <property type="entry name" value="Malate-DH_plant"/>
    <property type="match status" value="1"/>
</dbReference>
<dbReference type="NCBIfam" id="TIGR01759">
    <property type="entry name" value="MalateDH-SF1"/>
    <property type="match status" value="1"/>
</dbReference>
<dbReference type="NCBIfam" id="NF003916">
    <property type="entry name" value="PRK05442.1"/>
    <property type="match status" value="1"/>
</dbReference>
<dbReference type="PANTHER" id="PTHR23382">
    <property type="entry name" value="MALATE DEHYDROGENASE"/>
    <property type="match status" value="1"/>
</dbReference>
<dbReference type="Pfam" id="PF02866">
    <property type="entry name" value="Ldh_1_C"/>
    <property type="match status" value="1"/>
</dbReference>
<dbReference type="Pfam" id="PF00056">
    <property type="entry name" value="Ldh_1_N"/>
    <property type="match status" value="1"/>
</dbReference>
<dbReference type="SUPFAM" id="SSF56327">
    <property type="entry name" value="LDH C-terminal domain-like"/>
    <property type="match status" value="1"/>
</dbReference>
<dbReference type="SUPFAM" id="SSF51735">
    <property type="entry name" value="NAD(P)-binding Rossmann-fold domains"/>
    <property type="match status" value="1"/>
</dbReference>
<dbReference type="PROSITE" id="PS00068">
    <property type="entry name" value="MDH"/>
    <property type="match status" value="1"/>
</dbReference>
<gene>
    <name type="primary">MDH1</name>
</gene>
<proteinExistence type="evidence at transcript level"/>
<protein>
    <recommendedName>
        <fullName>Malate dehydrogenase [NADP], chloroplastic</fullName>
        <ecNumber>1.1.1.82</ecNumber>
    </recommendedName>
    <alternativeName>
        <fullName>NADP-MDH</fullName>
    </alternativeName>
</protein>
<comment type="function">
    <text>The chloroplastic, NADP-dependent form is essential for the photosynthesis C4 cycle, which allows plants to circumvent the problem of photorespiration. In C4 plants, NADP-MDH activity acts to convert oxaloacetate to malate in chloroplasts of mesophyll cells for transport to the bundle sheath cells.</text>
</comment>
<comment type="catalytic activity">
    <reaction>
        <text>(S)-malate + NADP(+) = oxaloacetate + NADPH + H(+)</text>
        <dbReference type="Rhea" id="RHEA:10824"/>
        <dbReference type="ChEBI" id="CHEBI:15378"/>
        <dbReference type="ChEBI" id="CHEBI:15589"/>
        <dbReference type="ChEBI" id="CHEBI:16452"/>
        <dbReference type="ChEBI" id="CHEBI:57783"/>
        <dbReference type="ChEBI" id="CHEBI:58349"/>
        <dbReference type="EC" id="1.1.1.82"/>
    </reaction>
</comment>
<comment type="activity regulation">
    <text>Chloroplast NADP-MDH is activated upon illumination. In order to be enzymatically active, disulfide bridges on the protein must be reduced by thioredoxin which receives electrons from ferredoxin and the electron transport system of photosynthesis.</text>
</comment>
<comment type="subunit">
    <text evidence="1">Homodimer.</text>
</comment>
<comment type="subcellular location">
    <subcellularLocation>
        <location>Plastid</location>
        <location>Chloroplast</location>
    </subcellularLocation>
</comment>
<comment type="induction">
    <text>Expression decreases transiently in the leaves after salt stress and then increases to levels greater than two-fold higher than in unstressed plants.</text>
</comment>
<comment type="similarity">
    <text evidence="4">Belongs to the LDH/MDH superfamily. MDH type 2 family.</text>
</comment>
<accession>Q05145</accession>
<reference key="1">
    <citation type="journal article" date="1993" name="Photosyn. Res.">
        <title>Molecular cloning and expression of chloroplast NADP-malate dehydrogenase during Crassulacean acid metabolism induction by salt stress.</title>
        <authorList>
            <person name="Cushman J.C."/>
        </authorList>
    </citation>
    <scope>NUCLEOTIDE SEQUENCE [MRNA]</scope>
    <source>
        <tissue>Leaf</tissue>
        <tissue>Root</tissue>
    </source>
</reference>
<evidence type="ECO:0000250" key="1"/>
<evidence type="ECO:0000255" key="2"/>
<evidence type="ECO:0000255" key="3">
    <source>
        <dbReference type="PROSITE-ProRule" id="PRU10004"/>
    </source>
</evidence>
<evidence type="ECO:0000305" key="4"/>